<protein>
    <recommendedName>
        <fullName evidence="1">tRNA modification GTPase MnmE</fullName>
        <ecNumber evidence="1">3.6.-.-</ecNumber>
    </recommendedName>
</protein>
<organism>
    <name type="scientific">Thermus thermophilus (strain ATCC 27634 / DSM 579 / HB8)</name>
    <dbReference type="NCBI Taxonomy" id="300852"/>
    <lineage>
        <taxon>Bacteria</taxon>
        <taxon>Thermotogati</taxon>
        <taxon>Deinococcota</taxon>
        <taxon>Deinococci</taxon>
        <taxon>Thermales</taxon>
        <taxon>Thermaceae</taxon>
        <taxon>Thermus</taxon>
    </lineage>
</organism>
<comment type="function">
    <text evidence="1">Exhibits a very high intrinsic GTPase hydrolysis rate. Involved in the addition of a carboxymethylaminomethyl (cmnm) group at the wobble position (U34) of certain tRNAs, forming tRNA-cmnm(5)s(2)U34.</text>
</comment>
<comment type="cofactor">
    <cofactor evidence="1">
        <name>K(+)</name>
        <dbReference type="ChEBI" id="CHEBI:29103"/>
    </cofactor>
    <text evidence="1">Binds 1 potassium ion per subunit.</text>
</comment>
<comment type="subunit">
    <text evidence="1">Homodimer. Heterotetramer of two MnmE and two MnmG subunits.</text>
</comment>
<comment type="subcellular location">
    <subcellularLocation>
        <location evidence="1">Cytoplasm</location>
    </subcellularLocation>
</comment>
<comment type="similarity">
    <text evidence="1">Belongs to the TRAFAC class TrmE-Era-EngA-EngB-Septin-like GTPase superfamily. TrmE GTPase family.</text>
</comment>
<accession>Q5SJS7</accession>
<evidence type="ECO:0000255" key="1">
    <source>
        <dbReference type="HAMAP-Rule" id="MF_00379"/>
    </source>
</evidence>
<gene>
    <name evidence="1" type="primary">mnmE</name>
    <name evidence="1" type="synonym">trmE</name>
    <name type="ordered locus">TTHA0931</name>
</gene>
<name>MNME_THET8</name>
<sequence>MNLKDPICAIATPPGKGAIGVVRLSGEGALEIAARVWRGKDPRRLKGGRFALGEVVDPKTGEAIDQAILLVFRAPRSYTGEDLVEFQTHGSPAVLRRVMEVLVAEGARPAGRGEFTFRAYLNGKMDLAQAEAVLALIEAEGELARRQALRALEGALSRRIEALENRLLNLLAHIQALLDYPEEGVEPLEAERTIREVLAEVEALLAQAKASRLAQKGARLALIGAPNAGKSSLLNALLGYERALVSPIPGTTRDYLEAPLELFGIPLVAVDTAGVRETEDPVERMGVERALGIAEEADLVLYVVDRSQPKPAPPPLPWARTLKVATKSDLPPAWEDPEFLPVSSLTGEGLDRLKEAVREALLGREGGEVLLTERQVEALLRARERLEEALSLPEDLMGLALEEAARALALLTGKEVAEEVVARVFQNFCVGK</sequence>
<keyword id="KW-0963">Cytoplasm</keyword>
<keyword id="KW-0342">GTP-binding</keyword>
<keyword id="KW-0378">Hydrolase</keyword>
<keyword id="KW-0460">Magnesium</keyword>
<keyword id="KW-0479">Metal-binding</keyword>
<keyword id="KW-0547">Nucleotide-binding</keyword>
<keyword id="KW-0630">Potassium</keyword>
<keyword id="KW-1185">Reference proteome</keyword>
<keyword id="KW-0819">tRNA processing</keyword>
<feature type="chain" id="PRO_0000345930" description="tRNA modification GTPase MnmE">
    <location>
        <begin position="1"/>
        <end position="432"/>
    </location>
</feature>
<feature type="domain" description="TrmE-type G">
    <location>
        <begin position="217"/>
        <end position="362"/>
    </location>
</feature>
<feature type="binding site" evidence="1">
    <location>
        <position position="23"/>
    </location>
    <ligand>
        <name>(6S)-5-formyl-5,6,7,8-tetrahydrofolate</name>
        <dbReference type="ChEBI" id="CHEBI:57457"/>
    </ligand>
</feature>
<feature type="binding site" evidence="1">
    <location>
        <position position="85"/>
    </location>
    <ligand>
        <name>(6S)-5-formyl-5,6,7,8-tetrahydrofolate</name>
        <dbReference type="ChEBI" id="CHEBI:57457"/>
    </ligand>
</feature>
<feature type="binding site" evidence="1">
    <location>
        <position position="124"/>
    </location>
    <ligand>
        <name>(6S)-5-formyl-5,6,7,8-tetrahydrofolate</name>
        <dbReference type="ChEBI" id="CHEBI:57457"/>
    </ligand>
</feature>
<feature type="binding site" evidence="1">
    <location>
        <begin position="227"/>
        <end position="232"/>
    </location>
    <ligand>
        <name>GTP</name>
        <dbReference type="ChEBI" id="CHEBI:37565"/>
    </ligand>
</feature>
<feature type="binding site" evidence="1">
    <location>
        <position position="227"/>
    </location>
    <ligand>
        <name>K(+)</name>
        <dbReference type="ChEBI" id="CHEBI:29103"/>
    </ligand>
</feature>
<feature type="binding site" evidence="1">
    <location>
        <position position="231"/>
    </location>
    <ligand>
        <name>Mg(2+)</name>
        <dbReference type="ChEBI" id="CHEBI:18420"/>
    </ligand>
</feature>
<feature type="binding site" evidence="1">
    <location>
        <begin position="246"/>
        <end position="252"/>
    </location>
    <ligand>
        <name>GTP</name>
        <dbReference type="ChEBI" id="CHEBI:37565"/>
    </ligand>
</feature>
<feature type="binding site" evidence="1">
    <location>
        <position position="246"/>
    </location>
    <ligand>
        <name>K(+)</name>
        <dbReference type="ChEBI" id="CHEBI:29103"/>
    </ligand>
</feature>
<feature type="binding site" evidence="1">
    <location>
        <position position="248"/>
    </location>
    <ligand>
        <name>K(+)</name>
        <dbReference type="ChEBI" id="CHEBI:29103"/>
    </ligand>
</feature>
<feature type="binding site" evidence="1">
    <location>
        <position position="251"/>
    </location>
    <ligand>
        <name>K(+)</name>
        <dbReference type="ChEBI" id="CHEBI:29103"/>
    </ligand>
</feature>
<feature type="binding site" evidence="1">
    <location>
        <position position="252"/>
    </location>
    <ligand>
        <name>Mg(2+)</name>
        <dbReference type="ChEBI" id="CHEBI:18420"/>
    </ligand>
</feature>
<feature type="binding site" evidence="1">
    <location>
        <begin position="271"/>
        <end position="274"/>
    </location>
    <ligand>
        <name>GTP</name>
        <dbReference type="ChEBI" id="CHEBI:37565"/>
    </ligand>
</feature>
<feature type="binding site" evidence="1">
    <location>
        <position position="432"/>
    </location>
    <ligand>
        <name>(6S)-5-formyl-5,6,7,8-tetrahydrofolate</name>
        <dbReference type="ChEBI" id="CHEBI:57457"/>
    </ligand>
</feature>
<reference key="1">
    <citation type="submission" date="2004-11" db="EMBL/GenBank/DDBJ databases">
        <title>Complete genome sequence of Thermus thermophilus HB8.</title>
        <authorList>
            <person name="Masui R."/>
            <person name="Kurokawa K."/>
            <person name="Nakagawa N."/>
            <person name="Tokunaga F."/>
            <person name="Koyama Y."/>
            <person name="Shibata T."/>
            <person name="Oshima T."/>
            <person name="Yokoyama S."/>
            <person name="Yasunaga T."/>
            <person name="Kuramitsu S."/>
        </authorList>
    </citation>
    <scope>NUCLEOTIDE SEQUENCE [LARGE SCALE GENOMIC DNA]</scope>
    <source>
        <strain>ATCC 27634 / DSM 579 / HB8</strain>
    </source>
</reference>
<dbReference type="EC" id="3.6.-.-" evidence="1"/>
<dbReference type="EMBL" id="AP008226">
    <property type="protein sequence ID" value="BAD70754.1"/>
    <property type="molecule type" value="Genomic_DNA"/>
</dbReference>
<dbReference type="RefSeq" id="WP_011228302.1">
    <property type="nucleotide sequence ID" value="NC_006461.1"/>
</dbReference>
<dbReference type="RefSeq" id="YP_144197.1">
    <property type="nucleotide sequence ID" value="NC_006461.1"/>
</dbReference>
<dbReference type="SMR" id="Q5SJS7"/>
<dbReference type="EnsemblBacteria" id="BAD70754">
    <property type="protein sequence ID" value="BAD70754"/>
    <property type="gene ID" value="BAD70754"/>
</dbReference>
<dbReference type="GeneID" id="3169140"/>
<dbReference type="KEGG" id="ttj:TTHA0931"/>
<dbReference type="PATRIC" id="fig|300852.9.peg.914"/>
<dbReference type="eggNOG" id="COG0486">
    <property type="taxonomic scope" value="Bacteria"/>
</dbReference>
<dbReference type="HOGENOM" id="CLU_019624_4_1_0"/>
<dbReference type="PhylomeDB" id="Q5SJS7"/>
<dbReference type="Proteomes" id="UP000000532">
    <property type="component" value="Chromosome"/>
</dbReference>
<dbReference type="GO" id="GO:0005829">
    <property type="term" value="C:cytosol"/>
    <property type="evidence" value="ECO:0007669"/>
    <property type="project" value="TreeGrafter"/>
</dbReference>
<dbReference type="GO" id="GO:0005525">
    <property type="term" value="F:GTP binding"/>
    <property type="evidence" value="ECO:0007669"/>
    <property type="project" value="UniProtKB-UniRule"/>
</dbReference>
<dbReference type="GO" id="GO:0003924">
    <property type="term" value="F:GTPase activity"/>
    <property type="evidence" value="ECO:0007669"/>
    <property type="project" value="UniProtKB-UniRule"/>
</dbReference>
<dbReference type="GO" id="GO:0046872">
    <property type="term" value="F:metal ion binding"/>
    <property type="evidence" value="ECO:0007669"/>
    <property type="project" value="UniProtKB-KW"/>
</dbReference>
<dbReference type="GO" id="GO:0030488">
    <property type="term" value="P:tRNA methylation"/>
    <property type="evidence" value="ECO:0007669"/>
    <property type="project" value="TreeGrafter"/>
</dbReference>
<dbReference type="GO" id="GO:0002098">
    <property type="term" value="P:tRNA wobble uridine modification"/>
    <property type="evidence" value="ECO:0007669"/>
    <property type="project" value="TreeGrafter"/>
</dbReference>
<dbReference type="CDD" id="cd04164">
    <property type="entry name" value="trmE"/>
    <property type="match status" value="1"/>
</dbReference>
<dbReference type="CDD" id="cd14858">
    <property type="entry name" value="TrmE_N"/>
    <property type="match status" value="1"/>
</dbReference>
<dbReference type="Gene3D" id="3.40.50.300">
    <property type="entry name" value="P-loop containing nucleotide triphosphate hydrolases"/>
    <property type="match status" value="1"/>
</dbReference>
<dbReference type="Gene3D" id="3.30.1360.120">
    <property type="entry name" value="Probable tRNA modification gtpase trme, domain 1"/>
    <property type="match status" value="1"/>
</dbReference>
<dbReference type="Gene3D" id="1.20.120.430">
    <property type="entry name" value="tRNA modification GTPase MnmE domain 2"/>
    <property type="match status" value="1"/>
</dbReference>
<dbReference type="HAMAP" id="MF_00379">
    <property type="entry name" value="GTPase_MnmE"/>
    <property type="match status" value="1"/>
</dbReference>
<dbReference type="InterPro" id="IPR031168">
    <property type="entry name" value="G_TrmE"/>
</dbReference>
<dbReference type="InterPro" id="IPR006073">
    <property type="entry name" value="GTP-bd"/>
</dbReference>
<dbReference type="InterPro" id="IPR018948">
    <property type="entry name" value="GTP-bd_TrmE_N"/>
</dbReference>
<dbReference type="InterPro" id="IPR004520">
    <property type="entry name" value="GTPase_MnmE"/>
</dbReference>
<dbReference type="InterPro" id="IPR027368">
    <property type="entry name" value="MnmE_dom2"/>
</dbReference>
<dbReference type="InterPro" id="IPR025867">
    <property type="entry name" value="MnmE_helical"/>
</dbReference>
<dbReference type="InterPro" id="IPR027417">
    <property type="entry name" value="P-loop_NTPase"/>
</dbReference>
<dbReference type="InterPro" id="IPR005225">
    <property type="entry name" value="Small_GTP-bd"/>
</dbReference>
<dbReference type="InterPro" id="IPR027266">
    <property type="entry name" value="TrmE/GcvT_dom1"/>
</dbReference>
<dbReference type="NCBIfam" id="TIGR00450">
    <property type="entry name" value="mnmE_trmE_thdF"/>
    <property type="match status" value="1"/>
</dbReference>
<dbReference type="NCBIfam" id="TIGR00231">
    <property type="entry name" value="small_GTP"/>
    <property type="match status" value="1"/>
</dbReference>
<dbReference type="PANTHER" id="PTHR42714">
    <property type="entry name" value="TRNA MODIFICATION GTPASE GTPBP3"/>
    <property type="match status" value="1"/>
</dbReference>
<dbReference type="PANTHER" id="PTHR42714:SF2">
    <property type="entry name" value="TRNA MODIFICATION GTPASE GTPBP3, MITOCHONDRIAL"/>
    <property type="match status" value="1"/>
</dbReference>
<dbReference type="Pfam" id="PF01926">
    <property type="entry name" value="MMR_HSR1"/>
    <property type="match status" value="1"/>
</dbReference>
<dbReference type="Pfam" id="PF12631">
    <property type="entry name" value="MnmE_helical"/>
    <property type="match status" value="1"/>
</dbReference>
<dbReference type="Pfam" id="PF10396">
    <property type="entry name" value="TrmE_N"/>
    <property type="match status" value="1"/>
</dbReference>
<dbReference type="PRINTS" id="PR00326">
    <property type="entry name" value="GTP1OBG"/>
</dbReference>
<dbReference type="SUPFAM" id="SSF52540">
    <property type="entry name" value="P-loop containing nucleoside triphosphate hydrolases"/>
    <property type="match status" value="1"/>
</dbReference>
<dbReference type="PROSITE" id="PS51709">
    <property type="entry name" value="G_TRME"/>
    <property type="match status" value="1"/>
</dbReference>
<proteinExistence type="inferred from homology"/>